<keyword id="KW-0020">Allergen</keyword>
<keyword id="KW-0903">Direct protein sequencing</keyword>
<keyword id="KW-1015">Disulfide bond</keyword>
<keyword id="KW-0964">Secreted</keyword>
<keyword id="KW-0732">Signal</keyword>
<proteinExistence type="evidence at protein level"/>
<evidence type="ECO:0000269" key="1">
    <source>
    </source>
</evidence>
<evidence type="ECO:0000305" key="2"/>
<organism>
    <name type="scientific">Dolichovespula maculata</name>
    <name type="common">Bald-faced hornet</name>
    <name type="synonym">Vespula maculata</name>
    <dbReference type="NCBI Taxonomy" id="7441"/>
    <lineage>
        <taxon>Eukaryota</taxon>
        <taxon>Metazoa</taxon>
        <taxon>Ecdysozoa</taxon>
        <taxon>Arthropoda</taxon>
        <taxon>Hexapoda</taxon>
        <taxon>Insecta</taxon>
        <taxon>Pterygota</taxon>
        <taxon>Neoptera</taxon>
        <taxon>Endopterygota</taxon>
        <taxon>Hymenoptera</taxon>
        <taxon>Apocrita</taxon>
        <taxon>Aculeata</taxon>
        <taxon>Vespoidea</taxon>
        <taxon>Vespidae</taxon>
        <taxon>Vespinae</taxon>
        <taxon>Dolichovespula</taxon>
    </lineage>
</organism>
<accession>P10736</accession>
<name>VA52_DOLMA</name>
<feature type="signal peptide">
    <location>
        <begin position="1"/>
        <end position="23"/>
    </location>
</feature>
<feature type="chain" id="PRO_0000006294" description="Venom allergen 5.01">
    <location>
        <begin position="24"/>
        <end position="227"/>
    </location>
</feature>
<feature type="domain" description="SCP">
    <location>
        <begin position="68"/>
        <end position="212"/>
    </location>
</feature>
<feature type="disulfide bond" evidence="1">
    <location>
        <begin position="27"/>
        <end position="39"/>
    </location>
</feature>
<feature type="disulfide bond" evidence="1">
    <location>
        <begin position="31"/>
        <end position="124"/>
    </location>
</feature>
<feature type="disulfide bond" evidence="1">
    <location>
        <begin position="49"/>
        <end position="117"/>
    </location>
</feature>
<feature type="disulfide bond" evidence="1">
    <location>
        <begin position="193"/>
        <end position="210"/>
    </location>
</feature>
<feature type="sequence variant">
    <original>V</original>
    <variation>A</variation>
    <location>
        <position position="54"/>
    </location>
</feature>
<sequence length="227" mass="26000">MEIGGLVYLILIITIINLSFGETNNYCKIKCRKGIHTLCKFGTSMKPNCGRNVVKAYGLTNDEKNEILKRHNDFRQNVAKGLETRGKPGPQPPAKNMNVLVWNDELAKIAQTWANQCDFNHDDCRNTAKYQVGQNIAISSTTATQFDRPSKLIKQWEDEVTEFNYKVGLQNSNFRKVGHYTQMVWGKTKEIGCGSIKYIEDNWYTHYLVCNYGPGGNDFNQPIYERK</sequence>
<reference key="1">
    <citation type="journal article" date="1988" name="Proc. Natl. Acad. Sci. U.S.A.">
        <title>cDNA cloning and primary structure of a white-face hornet venom allergen, antigen 5.</title>
        <authorList>
            <person name="Fang K.S.Y."/>
            <person name="Vitale M."/>
            <person name="Fehlner P."/>
            <person name="King T.P."/>
        </authorList>
    </citation>
    <scope>NUCLEOTIDE SEQUENCE [MRNA]</scope>
    <scope>PARTIAL PROTEIN SEQUENCE</scope>
    <source>
        <tissue>Venom</tissue>
        <tissue>Venom gland</tissue>
    </source>
</reference>
<reference key="2">
    <citation type="journal article" date="1990" name="Protein Seq. Data Anal.">
        <title>Structural studies of a hornet venom allergen antigen 5, Dol m V and its sequence similarity with other proteins.</title>
        <authorList>
            <person name="King T.P."/>
            <person name="Moran D."/>
            <person name="Wang D.F."/>
            <person name="Kochoumian L."/>
            <person name="Chait B.T."/>
        </authorList>
    </citation>
    <scope>PARTIAL PROTEIN SEQUENCE</scope>
    <scope>DISULFIDE BONDS</scope>
    <source>
        <tissue>Venom</tissue>
    </source>
</reference>
<comment type="subcellular location">
    <subcellularLocation>
        <location>Secreted</location>
    </subcellularLocation>
</comment>
<comment type="tissue specificity">
    <text>Expressed by the venom gland.</text>
</comment>
<comment type="allergen">
    <text>Causes an allergic reaction in human.</text>
</comment>
<comment type="similarity">
    <text evidence="2">Belongs to the CRISP family. Venom allergen 5-like subfamily.</text>
</comment>
<protein>
    <recommendedName>
        <fullName>Venom allergen 5.01</fullName>
    </recommendedName>
    <alternativeName>
        <fullName>Allergen Dol m V-A</fullName>
    </alternativeName>
    <alternativeName>
        <fullName>Antigen 5 form 2</fullName>
        <shortName>Ag5-2</shortName>
    </alternativeName>
    <alternativeName>
        <fullName>Cysteine-rich venom protein</fullName>
        <shortName>CRVP</shortName>
    </alternativeName>
    <allergenName>Dol m 5.01</allergenName>
</protein>
<dbReference type="EMBL" id="J03601">
    <property type="protein sequence ID" value="AAA28301.1"/>
    <property type="molecule type" value="mRNA"/>
</dbReference>
<dbReference type="PIR" id="A31085">
    <property type="entry name" value="A31085"/>
</dbReference>
<dbReference type="SMR" id="P10736"/>
<dbReference type="Allergome" id="1656">
    <property type="allergen name" value="Dol m 5.0101"/>
</dbReference>
<dbReference type="Allergome" id="330">
    <property type="allergen name" value="Dol m 5"/>
</dbReference>
<dbReference type="GO" id="GO:0005576">
    <property type="term" value="C:extracellular region"/>
    <property type="evidence" value="ECO:0007669"/>
    <property type="project" value="UniProtKB-SubCell"/>
</dbReference>
<dbReference type="CDD" id="cd05380">
    <property type="entry name" value="CAP_euk"/>
    <property type="match status" value="1"/>
</dbReference>
<dbReference type="Gene3D" id="3.40.33.10">
    <property type="entry name" value="CAP"/>
    <property type="match status" value="1"/>
</dbReference>
<dbReference type="InterPro" id="IPR018244">
    <property type="entry name" value="Allrgn_V5/Tpx1_CS"/>
</dbReference>
<dbReference type="InterPro" id="IPR014044">
    <property type="entry name" value="CAP_dom"/>
</dbReference>
<dbReference type="InterPro" id="IPR035940">
    <property type="entry name" value="CAP_sf"/>
</dbReference>
<dbReference type="InterPro" id="IPR001283">
    <property type="entry name" value="CRISP-related"/>
</dbReference>
<dbReference type="InterPro" id="IPR002413">
    <property type="entry name" value="V5_allergen-like"/>
</dbReference>
<dbReference type="PANTHER" id="PTHR10334">
    <property type="entry name" value="CYSTEINE-RICH SECRETORY PROTEIN-RELATED"/>
    <property type="match status" value="1"/>
</dbReference>
<dbReference type="Pfam" id="PF00188">
    <property type="entry name" value="CAP"/>
    <property type="match status" value="1"/>
</dbReference>
<dbReference type="PRINTS" id="PR00838">
    <property type="entry name" value="V5ALLERGEN"/>
</dbReference>
<dbReference type="PRINTS" id="PR00837">
    <property type="entry name" value="V5TPXLIKE"/>
</dbReference>
<dbReference type="SMART" id="SM00198">
    <property type="entry name" value="SCP"/>
    <property type="match status" value="1"/>
</dbReference>
<dbReference type="SUPFAM" id="SSF55797">
    <property type="entry name" value="PR-1-like"/>
    <property type="match status" value="1"/>
</dbReference>
<dbReference type="PROSITE" id="PS01009">
    <property type="entry name" value="CRISP_1"/>
    <property type="match status" value="1"/>
</dbReference>
<dbReference type="PROSITE" id="PS01010">
    <property type="entry name" value="CRISP_2"/>
    <property type="match status" value="1"/>
</dbReference>